<gene>
    <name type="primary">bglJ</name>
    <name type="ORF">NFIA_057590</name>
</gene>
<evidence type="ECO:0000250" key="1"/>
<evidence type="ECO:0000255" key="2"/>
<evidence type="ECO:0000255" key="3">
    <source>
        <dbReference type="PROSITE-ProRule" id="PRU01164"/>
    </source>
</evidence>
<evidence type="ECO:0000305" key="4"/>
<dbReference type="EC" id="3.2.1.21"/>
<dbReference type="EMBL" id="DS027698">
    <property type="protein sequence ID" value="EAW16409.1"/>
    <property type="molecule type" value="Genomic_DNA"/>
</dbReference>
<dbReference type="RefSeq" id="XP_001258306.1">
    <property type="nucleotide sequence ID" value="XM_001258305.1"/>
</dbReference>
<dbReference type="SMR" id="A1DNN8"/>
<dbReference type="STRING" id="331117.A1DNN8"/>
<dbReference type="GlyCosmos" id="A1DNN8">
    <property type="glycosylation" value="3 sites, No reported glycans"/>
</dbReference>
<dbReference type="EnsemblFungi" id="EAW16409">
    <property type="protein sequence ID" value="EAW16409"/>
    <property type="gene ID" value="NFIA_057590"/>
</dbReference>
<dbReference type="GeneID" id="4584822"/>
<dbReference type="KEGG" id="nfi:NFIA_057590"/>
<dbReference type="VEuPathDB" id="FungiDB:NFIA_057590"/>
<dbReference type="eggNOG" id="ENOG502QR4D">
    <property type="taxonomic scope" value="Eukaryota"/>
</dbReference>
<dbReference type="HOGENOM" id="CLU_004542_4_0_1"/>
<dbReference type="OMA" id="SQGCYGH"/>
<dbReference type="OrthoDB" id="47059at2759"/>
<dbReference type="UniPathway" id="UPA00696"/>
<dbReference type="Proteomes" id="UP000006702">
    <property type="component" value="Unassembled WGS sequence"/>
</dbReference>
<dbReference type="GO" id="GO:0005576">
    <property type="term" value="C:extracellular region"/>
    <property type="evidence" value="ECO:0007669"/>
    <property type="project" value="UniProtKB-SubCell"/>
</dbReference>
<dbReference type="GO" id="GO:0008422">
    <property type="term" value="F:beta-glucosidase activity"/>
    <property type="evidence" value="ECO:0007669"/>
    <property type="project" value="UniProtKB-EC"/>
</dbReference>
<dbReference type="GO" id="GO:0030245">
    <property type="term" value="P:cellulose catabolic process"/>
    <property type="evidence" value="ECO:0007669"/>
    <property type="project" value="UniProtKB-UniPathway"/>
</dbReference>
<dbReference type="FunFam" id="3.20.20.300:FF:000006">
    <property type="entry name" value="Beta-glucosidase H"/>
    <property type="match status" value="1"/>
</dbReference>
<dbReference type="FunFam" id="2.60.40.10:FF:000495">
    <property type="entry name" value="Periplasmic beta-glucosidase"/>
    <property type="match status" value="1"/>
</dbReference>
<dbReference type="FunFam" id="2.60.120.260:FF:000119">
    <property type="entry name" value="Probable beta-glucosidase I"/>
    <property type="match status" value="1"/>
</dbReference>
<dbReference type="Gene3D" id="2.60.120.260">
    <property type="entry name" value="Galactose-binding domain-like"/>
    <property type="match status" value="1"/>
</dbReference>
<dbReference type="Gene3D" id="3.40.50.1700">
    <property type="entry name" value="Glycoside hydrolase family 3 C-terminal domain"/>
    <property type="match status" value="1"/>
</dbReference>
<dbReference type="Gene3D" id="3.20.20.300">
    <property type="entry name" value="Glycoside hydrolase, family 3, N-terminal domain"/>
    <property type="match status" value="1"/>
</dbReference>
<dbReference type="Gene3D" id="2.60.40.10">
    <property type="entry name" value="Immunoglobulins"/>
    <property type="match status" value="1"/>
</dbReference>
<dbReference type="InterPro" id="IPR050288">
    <property type="entry name" value="Cellulose_deg_GH3"/>
</dbReference>
<dbReference type="InterPro" id="IPR026891">
    <property type="entry name" value="Fn3-like"/>
</dbReference>
<dbReference type="InterPro" id="IPR002772">
    <property type="entry name" value="Glyco_hydro_3_C"/>
</dbReference>
<dbReference type="InterPro" id="IPR036881">
    <property type="entry name" value="Glyco_hydro_3_C_sf"/>
</dbReference>
<dbReference type="InterPro" id="IPR001764">
    <property type="entry name" value="Glyco_hydro_3_N"/>
</dbReference>
<dbReference type="InterPro" id="IPR036962">
    <property type="entry name" value="Glyco_hydro_3_N_sf"/>
</dbReference>
<dbReference type="InterPro" id="IPR017853">
    <property type="entry name" value="Glycoside_hydrolase_SF"/>
</dbReference>
<dbReference type="InterPro" id="IPR013783">
    <property type="entry name" value="Ig-like_fold"/>
</dbReference>
<dbReference type="InterPro" id="IPR037524">
    <property type="entry name" value="PA14/GLEYA"/>
</dbReference>
<dbReference type="InterPro" id="IPR011658">
    <property type="entry name" value="PA14_dom"/>
</dbReference>
<dbReference type="PANTHER" id="PTHR42715">
    <property type="entry name" value="BETA-GLUCOSIDASE"/>
    <property type="match status" value="1"/>
</dbReference>
<dbReference type="PANTHER" id="PTHR42715:SF16">
    <property type="entry name" value="BETA-GLUCOSIDASE J-RELATED"/>
    <property type="match status" value="1"/>
</dbReference>
<dbReference type="Pfam" id="PF14310">
    <property type="entry name" value="Fn3-like"/>
    <property type="match status" value="1"/>
</dbReference>
<dbReference type="Pfam" id="PF00933">
    <property type="entry name" value="Glyco_hydro_3"/>
    <property type="match status" value="1"/>
</dbReference>
<dbReference type="Pfam" id="PF01915">
    <property type="entry name" value="Glyco_hydro_3_C"/>
    <property type="match status" value="1"/>
</dbReference>
<dbReference type="Pfam" id="PF07691">
    <property type="entry name" value="PA14"/>
    <property type="match status" value="1"/>
</dbReference>
<dbReference type="PRINTS" id="PR00133">
    <property type="entry name" value="GLHYDRLASE3"/>
</dbReference>
<dbReference type="SMART" id="SM01217">
    <property type="entry name" value="Fn3_like"/>
    <property type="match status" value="1"/>
</dbReference>
<dbReference type="SMART" id="SM00758">
    <property type="entry name" value="PA14"/>
    <property type="match status" value="1"/>
</dbReference>
<dbReference type="SUPFAM" id="SSF51445">
    <property type="entry name" value="(Trans)glycosidases"/>
    <property type="match status" value="1"/>
</dbReference>
<dbReference type="SUPFAM" id="SSF56988">
    <property type="entry name" value="Anthrax protective antigen"/>
    <property type="match status" value="1"/>
</dbReference>
<dbReference type="SUPFAM" id="SSF52279">
    <property type="entry name" value="Beta-D-glucan exohydrolase, C-terminal domain"/>
    <property type="match status" value="1"/>
</dbReference>
<dbReference type="PROSITE" id="PS51820">
    <property type="entry name" value="PA14"/>
    <property type="match status" value="1"/>
</dbReference>
<reference key="1">
    <citation type="journal article" date="2008" name="PLoS Genet.">
        <title>Genomic islands in the pathogenic filamentous fungus Aspergillus fumigatus.</title>
        <authorList>
            <person name="Fedorova N.D."/>
            <person name="Khaldi N."/>
            <person name="Joardar V.S."/>
            <person name="Maiti R."/>
            <person name="Amedeo P."/>
            <person name="Anderson M.J."/>
            <person name="Crabtree J."/>
            <person name="Silva J.C."/>
            <person name="Badger J.H."/>
            <person name="Albarraq A."/>
            <person name="Angiuoli S."/>
            <person name="Bussey H."/>
            <person name="Bowyer P."/>
            <person name="Cotty P.J."/>
            <person name="Dyer P.S."/>
            <person name="Egan A."/>
            <person name="Galens K."/>
            <person name="Fraser-Liggett C.M."/>
            <person name="Haas B.J."/>
            <person name="Inman J.M."/>
            <person name="Kent R."/>
            <person name="Lemieux S."/>
            <person name="Malavazi I."/>
            <person name="Orvis J."/>
            <person name="Roemer T."/>
            <person name="Ronning C.M."/>
            <person name="Sundaram J.P."/>
            <person name="Sutton G."/>
            <person name="Turner G."/>
            <person name="Venter J.C."/>
            <person name="White O.R."/>
            <person name="Whitty B.R."/>
            <person name="Youngman P."/>
            <person name="Wolfe K.H."/>
            <person name="Goldman G.H."/>
            <person name="Wortman J.R."/>
            <person name="Jiang B."/>
            <person name="Denning D.W."/>
            <person name="Nierman W.C."/>
        </authorList>
    </citation>
    <scope>NUCLEOTIDE SEQUENCE [LARGE SCALE GENOMIC DNA]</scope>
    <source>
        <strain>ATCC 1020 / DSM 3700 / CBS 544.65 / FGSC A1164 / JCM 1740 / NRRL 181 / WB 181</strain>
    </source>
</reference>
<proteinExistence type="inferred from homology"/>
<comment type="function">
    <text evidence="1">Beta-glucosidases are one of a number of cellulolytic enzymes involved in the degradation of cellulosic biomass. Catalyzes the last step releasing glucose from the inhibitory cellobiose (By similarity).</text>
</comment>
<comment type="catalytic activity">
    <reaction>
        <text>Hydrolysis of terminal, non-reducing beta-D-glucosyl residues with release of beta-D-glucose.</text>
        <dbReference type="EC" id="3.2.1.21"/>
    </reaction>
</comment>
<comment type="pathway">
    <text>Glycan metabolism; cellulose degradation.</text>
</comment>
<comment type="subcellular location">
    <subcellularLocation>
        <location evidence="1">Secreted</location>
    </subcellularLocation>
</comment>
<comment type="similarity">
    <text evidence="4">Belongs to the glycosyl hydrolase 3 family.</text>
</comment>
<feature type="chain" id="PRO_0000394895" description="Probable beta-glucosidase J">
    <location>
        <begin position="1"/>
        <end position="864"/>
    </location>
</feature>
<feature type="domain" description="PA14" evidence="3">
    <location>
        <begin position="411"/>
        <end position="578"/>
    </location>
</feature>
<feature type="active site" evidence="1">
    <location>
        <position position="233"/>
    </location>
</feature>
<feature type="glycosylation site" description="N-linked (GlcNAc...) asparagine" evidence="2">
    <location>
        <position position="434"/>
    </location>
</feature>
<feature type="glycosylation site" description="N-linked (GlcNAc...) asparagine" evidence="2">
    <location>
        <position position="447"/>
    </location>
</feature>
<feature type="glycosylation site" description="N-linked (GlcNAc...) asparagine" evidence="2">
    <location>
        <position position="503"/>
    </location>
</feature>
<protein>
    <recommendedName>
        <fullName>Probable beta-glucosidase J</fullName>
        <ecNumber>3.2.1.21</ecNumber>
    </recommendedName>
    <alternativeName>
        <fullName>Beta-D-glucoside glucohydrolase J</fullName>
    </alternativeName>
    <alternativeName>
        <fullName>Cellobiase J</fullName>
    </alternativeName>
    <alternativeName>
        <fullName>Gentiobiase J</fullName>
    </alternativeName>
</protein>
<sequence length="864" mass="93160">MGSLDTVDMGQRAIDQIISELSLNEKVSLLSGVDAWHTFAIPRLGIPSIRTTDGPNGARGTRYFNGVPSACLPCGTALGATFDKDLIFSLGQLLAAECKAKGAHVLLGPTINIQRGPLGGRGFESFSEDPVLSGLAAASYCSGVQDGGVVPTLKHLVCNDQEHERVAVSALVTPRALREIYLLPFQLAIRGARPGAVMTSYNKVNGLHASESPGLIRDILRGEWGYEGAVISDWFGTYSVADAVNAGLDLEMPGPTRFRGPALMHALTSNKVSEKTLNERVRKVLELVQLASRSRVPEYAPERKLNRPEDRALLRRAAGESVVLLKNDKNDNNNSPILPLDREKKTLVIGPNADIAAYCGGGSASLLAYYTVTPRQGIADKCGADQVVFSQGCYGHKELPLLGEHLRTIETGEPGYTFRVYTEPPAASGSFKGNGSRKPVDELHMTNSSAFLMDYSHPQISGDTYYATLEGTLEPPESGVYEFGLTVAGTGLLYIDGVLVVDNKTVQRAGTSFFGIGTVEERGERYLEAGKKHHVFVEFGTAPTSNLQHHGVVSFGPGGLRLGGCRKLDTDAAIQQAVQSAAQTDQVVVCVGLSGDWESEGFDRPHMDLPPGTDELVNAVLEVQPNAVIVVQSGTPVTMPWADKAKALLQAWYGGNEAGNGIADVLFGDVNPSAKLPLTFPRELSQNPSYLSYRSERGRVLYSEDIYVGYRYYDKARQPPLFRFGHGLSYTTFHLSDLAVRETAPYAANIKESSLRVSVTVSNTGARPGAEVVLVYVRPPPATCSVGRPVRELKGYEKVMLQPGETREVSIAIPVGYATSFWDEGCDAWLSEKGLYFVEAVGTGECNTLVAPLSVQVSRMWNGL</sequence>
<name>BGLJ_NEOFI</name>
<organism>
    <name type="scientific">Neosartorya fischeri (strain ATCC 1020 / DSM 3700 / CBS 544.65 / FGSC A1164 / JCM 1740 / NRRL 181 / WB 181)</name>
    <name type="common">Aspergillus fischerianus</name>
    <dbReference type="NCBI Taxonomy" id="331117"/>
    <lineage>
        <taxon>Eukaryota</taxon>
        <taxon>Fungi</taxon>
        <taxon>Dikarya</taxon>
        <taxon>Ascomycota</taxon>
        <taxon>Pezizomycotina</taxon>
        <taxon>Eurotiomycetes</taxon>
        <taxon>Eurotiomycetidae</taxon>
        <taxon>Eurotiales</taxon>
        <taxon>Aspergillaceae</taxon>
        <taxon>Aspergillus</taxon>
        <taxon>Aspergillus subgen. Fumigati</taxon>
    </lineage>
</organism>
<keyword id="KW-0119">Carbohydrate metabolism</keyword>
<keyword id="KW-0136">Cellulose degradation</keyword>
<keyword id="KW-0325">Glycoprotein</keyword>
<keyword id="KW-0326">Glycosidase</keyword>
<keyword id="KW-0378">Hydrolase</keyword>
<keyword id="KW-0624">Polysaccharide degradation</keyword>
<keyword id="KW-1185">Reference proteome</keyword>
<keyword id="KW-0964">Secreted</keyword>
<accession>A1DNN8</accession>